<comment type="function">
    <text evidence="3">Catalyzes oxidation of L-threonate to 2-oxo-tetronate. Can use either NAD(+) or NADP(+) as cosubstrate, with a preference for NAD(+).</text>
</comment>
<comment type="catalytic activity">
    <reaction evidence="3">
        <text>L-threonate + NAD(+) = 2-dehydro-L-erythronate + NADH + H(+)</text>
        <dbReference type="Rhea" id="RHEA:52548"/>
        <dbReference type="ChEBI" id="CHEBI:15378"/>
        <dbReference type="ChEBI" id="CHEBI:57540"/>
        <dbReference type="ChEBI" id="CHEBI:57561"/>
        <dbReference type="ChEBI" id="CHEBI:57945"/>
        <dbReference type="ChEBI" id="CHEBI:136669"/>
        <dbReference type="EC" id="1.1.1.411"/>
    </reaction>
</comment>
<comment type="biophysicochemical properties">
    <kinetics>
        <KM evidence="3">0.024 mM for NAD(+)</KM>
        <KM evidence="3">0.14 mM for NADP(+)</KM>
        <text evidence="3">kcat is 9.7 sec(-1) with NAD(+) as cosubstrate. kcat is 2.9 sec(-1) with NADP(+) as cosubstrate.</text>
    </kinetics>
</comment>
<comment type="similarity">
    <text evidence="5">Belongs to the HIBADH-related family. L-threonate dehydrogenase subfamily.</text>
</comment>
<organism>
    <name type="scientific">Haemophilus influenzae (strain ATCC 51907 / DSM 11121 / KW20 / Rd)</name>
    <dbReference type="NCBI Taxonomy" id="71421"/>
    <lineage>
        <taxon>Bacteria</taxon>
        <taxon>Pseudomonadati</taxon>
        <taxon>Pseudomonadota</taxon>
        <taxon>Gammaproteobacteria</taxon>
        <taxon>Pasteurellales</taxon>
        <taxon>Pasteurellaceae</taxon>
        <taxon>Haemophilus</taxon>
    </lineage>
</organism>
<dbReference type="EC" id="1.1.1.411" evidence="3"/>
<dbReference type="EMBL" id="L42023">
    <property type="protein sequence ID" value="AAC22671.1"/>
    <property type="molecule type" value="Genomic_DNA"/>
</dbReference>
<dbReference type="PIR" id="B64164">
    <property type="entry name" value="B64164"/>
</dbReference>
<dbReference type="RefSeq" id="NP_439171.1">
    <property type="nucleotide sequence ID" value="NC_000907.1"/>
</dbReference>
<dbReference type="SMR" id="P44979"/>
<dbReference type="STRING" id="71421.HI_1010"/>
<dbReference type="EnsemblBacteria" id="AAC22671">
    <property type="protein sequence ID" value="AAC22671"/>
    <property type="gene ID" value="HI_1010"/>
</dbReference>
<dbReference type="KEGG" id="hin:HI_1010"/>
<dbReference type="PATRIC" id="fig|71421.8.peg.1054"/>
<dbReference type="eggNOG" id="COG2084">
    <property type="taxonomic scope" value="Bacteria"/>
</dbReference>
<dbReference type="HOGENOM" id="CLU_035117_1_2_6"/>
<dbReference type="OrthoDB" id="9786703at2"/>
<dbReference type="PhylomeDB" id="P44979"/>
<dbReference type="BioCyc" id="HINF71421:G1GJ1-1050-MONOMER"/>
<dbReference type="BioCyc" id="MetaCyc:MONOMER-20181"/>
<dbReference type="SABIO-RK" id="P44979"/>
<dbReference type="Proteomes" id="UP000000579">
    <property type="component" value="Chromosome"/>
</dbReference>
<dbReference type="GO" id="GO:0051287">
    <property type="term" value="F:NAD binding"/>
    <property type="evidence" value="ECO:0007669"/>
    <property type="project" value="InterPro"/>
</dbReference>
<dbReference type="GO" id="GO:0050661">
    <property type="term" value="F:NADP binding"/>
    <property type="evidence" value="ECO:0007669"/>
    <property type="project" value="InterPro"/>
</dbReference>
<dbReference type="GO" id="GO:0016616">
    <property type="term" value="F:oxidoreductase activity, acting on the CH-OH group of donors, NAD or NADP as acceptor"/>
    <property type="evidence" value="ECO:0007669"/>
    <property type="project" value="InterPro"/>
</dbReference>
<dbReference type="GO" id="GO:0016054">
    <property type="term" value="P:organic acid catabolic process"/>
    <property type="evidence" value="ECO:0007669"/>
    <property type="project" value="UniProtKB-ARBA"/>
</dbReference>
<dbReference type="Gene3D" id="1.10.1040.10">
    <property type="entry name" value="N-(1-d-carboxylethyl)-l-norvaline Dehydrogenase, domain 2"/>
    <property type="match status" value="1"/>
</dbReference>
<dbReference type="Gene3D" id="3.40.50.720">
    <property type="entry name" value="NAD(P)-binding Rossmann-like Domain"/>
    <property type="match status" value="1"/>
</dbReference>
<dbReference type="InterPro" id="IPR002204">
    <property type="entry name" value="3-OH-isobutyrate_DH-rel_CS"/>
</dbReference>
<dbReference type="InterPro" id="IPR008927">
    <property type="entry name" value="6-PGluconate_DH-like_C_sf"/>
</dbReference>
<dbReference type="InterPro" id="IPR013328">
    <property type="entry name" value="6PGD_dom2"/>
</dbReference>
<dbReference type="InterPro" id="IPR006115">
    <property type="entry name" value="6PGDH_NADP-bd"/>
</dbReference>
<dbReference type="InterPro" id="IPR029154">
    <property type="entry name" value="HIBADH-like_NADP-bd"/>
</dbReference>
<dbReference type="InterPro" id="IPR015815">
    <property type="entry name" value="HIBADH-related"/>
</dbReference>
<dbReference type="InterPro" id="IPR050006">
    <property type="entry name" value="LtnD"/>
</dbReference>
<dbReference type="InterPro" id="IPR036291">
    <property type="entry name" value="NAD(P)-bd_dom_sf"/>
</dbReference>
<dbReference type="NCBIfam" id="NF043037">
    <property type="entry name" value="ThreonDh"/>
    <property type="match status" value="1"/>
</dbReference>
<dbReference type="PANTHER" id="PTHR43060">
    <property type="entry name" value="3-HYDROXYISOBUTYRATE DEHYDROGENASE-LIKE 1, MITOCHONDRIAL-RELATED"/>
    <property type="match status" value="1"/>
</dbReference>
<dbReference type="PANTHER" id="PTHR43060:SF17">
    <property type="entry name" value="L-THREONATE DEHYDROGENASE"/>
    <property type="match status" value="1"/>
</dbReference>
<dbReference type="Pfam" id="PF14833">
    <property type="entry name" value="NAD_binding_11"/>
    <property type="match status" value="1"/>
</dbReference>
<dbReference type="Pfam" id="PF03446">
    <property type="entry name" value="NAD_binding_2"/>
    <property type="match status" value="1"/>
</dbReference>
<dbReference type="PIRSF" id="PIRSF000103">
    <property type="entry name" value="HIBADH"/>
    <property type="match status" value="1"/>
</dbReference>
<dbReference type="SUPFAM" id="SSF48179">
    <property type="entry name" value="6-phosphogluconate dehydrogenase C-terminal domain-like"/>
    <property type="match status" value="1"/>
</dbReference>
<dbReference type="SUPFAM" id="SSF51735">
    <property type="entry name" value="NAD(P)-binding Rossmann-fold domains"/>
    <property type="match status" value="1"/>
</dbReference>
<dbReference type="PROSITE" id="PS00895">
    <property type="entry name" value="3_HYDROXYISOBUT_DH"/>
    <property type="match status" value="1"/>
</dbReference>
<gene>
    <name evidence="4" type="primary">ltnD</name>
    <name type="ordered locus">HI_1010</name>
</gene>
<reference key="1">
    <citation type="journal article" date="1995" name="Science">
        <title>Whole-genome random sequencing and assembly of Haemophilus influenzae Rd.</title>
        <authorList>
            <person name="Fleischmann R.D."/>
            <person name="Adams M.D."/>
            <person name="White O."/>
            <person name="Clayton R.A."/>
            <person name="Kirkness E.F."/>
            <person name="Kerlavage A.R."/>
            <person name="Bult C.J."/>
            <person name="Tomb J.-F."/>
            <person name="Dougherty B.A."/>
            <person name="Merrick J.M."/>
            <person name="McKenney K."/>
            <person name="Sutton G.G."/>
            <person name="FitzHugh W."/>
            <person name="Fields C.A."/>
            <person name="Gocayne J.D."/>
            <person name="Scott J.D."/>
            <person name="Shirley R."/>
            <person name="Liu L.-I."/>
            <person name="Glodek A."/>
            <person name="Kelley J.M."/>
            <person name="Weidman J.F."/>
            <person name="Phillips C.A."/>
            <person name="Spriggs T."/>
            <person name="Hedblom E."/>
            <person name="Cotton M.D."/>
            <person name="Utterback T.R."/>
            <person name="Hanna M.C."/>
            <person name="Nguyen D.T."/>
            <person name="Saudek D.M."/>
            <person name="Brandon R.C."/>
            <person name="Fine L.D."/>
            <person name="Fritchman J.L."/>
            <person name="Fuhrmann J.L."/>
            <person name="Geoghagen N.S.M."/>
            <person name="Gnehm C.L."/>
            <person name="McDonald L.A."/>
            <person name="Small K.V."/>
            <person name="Fraser C.M."/>
            <person name="Smith H.O."/>
            <person name="Venter J.C."/>
        </authorList>
    </citation>
    <scope>NUCLEOTIDE SEQUENCE [LARGE SCALE GENOMIC DNA]</scope>
    <source>
        <strain>ATCC 51907 / DSM 11121 / KW20 / Rd</strain>
    </source>
</reference>
<reference key="2">
    <citation type="journal article" date="2016" name="Proc. Natl. Acad. Sci. U.S.A.">
        <title>Assignment of function to a domain of unknown function: DUF1537 is a new kinase family in catabolic pathways for acid sugars.</title>
        <authorList>
            <person name="Zhang X."/>
            <person name="Carter M.S."/>
            <person name="Vetting M.W."/>
            <person name="San Francisco B."/>
            <person name="Zhao S."/>
            <person name="Al-Obaidi N.F."/>
            <person name="Solbiati J.O."/>
            <person name="Thiaville J.J."/>
            <person name="de Crecy-Lagard V."/>
            <person name="Jacobson M.P."/>
            <person name="Almo S.C."/>
            <person name="Gerlt J.A."/>
        </authorList>
    </citation>
    <scope>FUNCTION</scope>
    <scope>CATALYTIC ACTIVITY</scope>
    <scope>BIOPHYSICOCHEMICAL PROPERTIES</scope>
    <source>
        <strain>ATCC 51907 / DSM 11121 / KW20 / Rd</strain>
    </source>
</reference>
<sequence>MENQNYSVAVIGLGSMGMGAAVSCINAGLTTYGIDLNPVALEKLKAAGAKAVAANGYDFAHELDAVVILVVNAAQANAVLFGENGIAKKLKAGTAVMVSSTMAAQDAQIISQKLTELGLIMLDAPVSGGAAKALKGEMTVMASGSKQAFELLQPVLDATAAKVYNIGEEIGLGATVKIVHQLLAGVHIAAGAEAMALASKAGIPLDVMYDVVTNAAGNSWMFENRMKHVVEGDYTPLSMVDIFVKDLGLVNDTAKSLHFPLHLASTAYSMFTEASNAGYGKEDDSAVIKIFSGVSLPKKGA</sequence>
<keyword id="KW-0119">Carbohydrate metabolism</keyword>
<keyword id="KW-0520">NAD</keyword>
<keyword id="KW-0521">NADP</keyword>
<keyword id="KW-0560">Oxidoreductase</keyword>
<keyword id="KW-1185">Reference proteome</keyword>
<evidence type="ECO:0000250" key="1">
    <source>
        <dbReference type="UniProtKB" id="P31937"/>
    </source>
</evidence>
<evidence type="ECO:0000250" key="2">
    <source>
        <dbReference type="UniProtKB" id="Q9I5I6"/>
    </source>
</evidence>
<evidence type="ECO:0000269" key="3">
    <source>
    </source>
</evidence>
<evidence type="ECO:0000303" key="4">
    <source>
    </source>
</evidence>
<evidence type="ECO:0000305" key="5"/>
<name>LTND_HAEIN</name>
<proteinExistence type="evidence at protein level"/>
<accession>P44979</accession>
<feature type="chain" id="PRO_0000173063" description="L-threonate dehydrogenase">
    <location>
        <begin position="1"/>
        <end position="301"/>
    </location>
</feature>
<feature type="active site" evidence="2">
    <location>
        <position position="177"/>
    </location>
</feature>
<feature type="binding site" evidence="1">
    <location>
        <begin position="6"/>
        <end position="34"/>
    </location>
    <ligand>
        <name>NAD(+)</name>
        <dbReference type="ChEBI" id="CHEBI:57540"/>
    </ligand>
</feature>
<feature type="binding site" evidence="1">
    <location>
        <position position="101"/>
    </location>
    <ligand>
        <name>NAD(+)</name>
        <dbReference type="ChEBI" id="CHEBI:57540"/>
    </ligand>
</feature>
<feature type="binding site" evidence="1">
    <location>
        <position position="245"/>
    </location>
    <ligand>
        <name>NAD(+)</name>
        <dbReference type="ChEBI" id="CHEBI:57540"/>
    </ligand>
</feature>
<protein>
    <recommendedName>
        <fullName evidence="4">L-threonate dehydrogenase</fullName>
        <ecNumber evidence="3">1.1.1.411</ecNumber>
    </recommendedName>
</protein>